<organism>
    <name type="scientific">Helicobacter pylori (strain J99 / ATCC 700824)</name>
    <name type="common">Campylobacter pylori J99</name>
    <dbReference type="NCBI Taxonomy" id="85963"/>
    <lineage>
        <taxon>Bacteria</taxon>
        <taxon>Pseudomonadati</taxon>
        <taxon>Campylobacterota</taxon>
        <taxon>Epsilonproteobacteria</taxon>
        <taxon>Campylobacterales</taxon>
        <taxon>Helicobacteraceae</taxon>
        <taxon>Helicobacter</taxon>
    </lineage>
</organism>
<reference key="1">
    <citation type="journal article" date="1999" name="Nature">
        <title>Genomic sequence comparison of two unrelated isolates of the human gastric pathogen Helicobacter pylori.</title>
        <authorList>
            <person name="Alm R.A."/>
            <person name="Ling L.-S.L."/>
            <person name="Moir D.T."/>
            <person name="King B.L."/>
            <person name="Brown E.D."/>
            <person name="Doig P.C."/>
            <person name="Smith D.R."/>
            <person name="Noonan B."/>
            <person name="Guild B.C."/>
            <person name="deJonge B.L."/>
            <person name="Carmel G."/>
            <person name="Tummino P.J."/>
            <person name="Caruso A."/>
            <person name="Uria-Nickelsen M."/>
            <person name="Mills D.M."/>
            <person name="Ives C."/>
            <person name="Gibson R."/>
            <person name="Merberg D."/>
            <person name="Mills S.D."/>
            <person name="Jiang Q."/>
            <person name="Taylor D.E."/>
            <person name="Vovis G.F."/>
            <person name="Trust T.J."/>
        </authorList>
    </citation>
    <scope>NUCLEOTIDE SEQUENCE [LARGE SCALE GENOMIC DNA]</scope>
    <source>
        <strain>J99 / ATCC 700824</strain>
    </source>
</reference>
<feature type="chain" id="PRO_0000102169" description="Transcription-repair-coupling factor">
    <location>
        <begin position="1"/>
        <end position="1001"/>
    </location>
</feature>
<feature type="domain" description="Helicase ATP-binding" evidence="1">
    <location>
        <begin position="499"/>
        <end position="658"/>
    </location>
</feature>
<feature type="domain" description="Helicase C-terminal" evidence="1">
    <location>
        <begin position="679"/>
        <end position="835"/>
    </location>
</feature>
<feature type="short sequence motif" description="DEEH box">
    <location>
        <begin position="611"/>
        <end position="614"/>
    </location>
</feature>
<feature type="binding site" evidence="1">
    <location>
        <begin position="512"/>
        <end position="519"/>
    </location>
    <ligand>
        <name>ATP</name>
        <dbReference type="ChEBI" id="CHEBI:30616"/>
    </ligand>
</feature>
<keyword id="KW-0067">ATP-binding</keyword>
<keyword id="KW-0963">Cytoplasm</keyword>
<keyword id="KW-0227">DNA damage</keyword>
<keyword id="KW-0234">DNA repair</keyword>
<keyword id="KW-0238">DNA-binding</keyword>
<keyword id="KW-0347">Helicase</keyword>
<keyword id="KW-0378">Hydrolase</keyword>
<keyword id="KW-0547">Nucleotide-binding</keyword>
<accession>Q9ZJ57</accession>
<comment type="function">
    <text evidence="1">Couples transcription and DNA repair by recognizing RNA polymerase (RNAP) stalled at DNA lesions. Mediates ATP-dependent release of RNAP and its truncated transcript from the DNA, and recruitment of nucleotide excision repair machinery to the damaged site.</text>
</comment>
<comment type="subcellular location">
    <subcellularLocation>
        <location evidence="1">Cytoplasm</location>
    </subcellularLocation>
</comment>
<comment type="similarity">
    <text evidence="1">In the N-terminal section; belongs to the UvrB family.</text>
</comment>
<comment type="similarity">
    <text evidence="1">In the C-terminal section; belongs to the helicase family. RecG subfamily.</text>
</comment>
<dbReference type="EC" id="3.6.4.-" evidence="1"/>
<dbReference type="EMBL" id="AE001439">
    <property type="protein sequence ID" value="AAD07030.1"/>
    <property type="molecule type" value="Genomic_DNA"/>
</dbReference>
<dbReference type="PIR" id="E71806">
    <property type="entry name" value="E71806"/>
</dbReference>
<dbReference type="RefSeq" id="WP_000616318.1">
    <property type="nucleotide sequence ID" value="NC_000921.1"/>
</dbReference>
<dbReference type="SMR" id="Q9ZJ57"/>
<dbReference type="KEGG" id="hpj:jhp_1458"/>
<dbReference type="PATRIC" id="fig|85963.30.peg.1085"/>
<dbReference type="eggNOG" id="COG1197">
    <property type="taxonomic scope" value="Bacteria"/>
</dbReference>
<dbReference type="Proteomes" id="UP000000804">
    <property type="component" value="Chromosome"/>
</dbReference>
<dbReference type="GO" id="GO:0005737">
    <property type="term" value="C:cytoplasm"/>
    <property type="evidence" value="ECO:0007669"/>
    <property type="project" value="UniProtKB-SubCell"/>
</dbReference>
<dbReference type="GO" id="GO:0043138">
    <property type="term" value="F:3'-5' DNA helicase activity"/>
    <property type="evidence" value="ECO:0007669"/>
    <property type="project" value="TreeGrafter"/>
</dbReference>
<dbReference type="GO" id="GO:0005524">
    <property type="term" value="F:ATP binding"/>
    <property type="evidence" value="ECO:0007669"/>
    <property type="project" value="UniProtKB-UniRule"/>
</dbReference>
<dbReference type="GO" id="GO:0003684">
    <property type="term" value="F:damaged DNA binding"/>
    <property type="evidence" value="ECO:0007669"/>
    <property type="project" value="InterPro"/>
</dbReference>
<dbReference type="GO" id="GO:0016787">
    <property type="term" value="F:hydrolase activity"/>
    <property type="evidence" value="ECO:0007669"/>
    <property type="project" value="UniProtKB-KW"/>
</dbReference>
<dbReference type="GO" id="GO:0006310">
    <property type="term" value="P:DNA recombination"/>
    <property type="evidence" value="ECO:0007669"/>
    <property type="project" value="TreeGrafter"/>
</dbReference>
<dbReference type="GO" id="GO:0006270">
    <property type="term" value="P:DNA replication initiation"/>
    <property type="evidence" value="ECO:0007669"/>
    <property type="project" value="TreeGrafter"/>
</dbReference>
<dbReference type="GO" id="GO:0006302">
    <property type="term" value="P:double-strand break repair"/>
    <property type="evidence" value="ECO:0007669"/>
    <property type="project" value="TreeGrafter"/>
</dbReference>
<dbReference type="GO" id="GO:0006355">
    <property type="term" value="P:regulation of DNA-templated transcription"/>
    <property type="evidence" value="ECO:0007669"/>
    <property type="project" value="UniProtKB-UniRule"/>
</dbReference>
<dbReference type="GO" id="GO:0000716">
    <property type="term" value="P:transcription-coupled nucleotide-excision repair, DNA damage recognition"/>
    <property type="evidence" value="ECO:0007669"/>
    <property type="project" value="UniProtKB-UniRule"/>
</dbReference>
<dbReference type="CDD" id="cd17991">
    <property type="entry name" value="DEXHc_TRCF"/>
    <property type="match status" value="1"/>
</dbReference>
<dbReference type="CDD" id="cd18810">
    <property type="entry name" value="SF2_C_TRCF"/>
    <property type="match status" value="1"/>
</dbReference>
<dbReference type="Gene3D" id="2.40.10.170">
    <property type="match status" value="1"/>
</dbReference>
<dbReference type="Gene3D" id="3.40.50.300">
    <property type="entry name" value="P-loop containing nucleotide triphosphate hydrolases"/>
    <property type="match status" value="2"/>
</dbReference>
<dbReference type="Gene3D" id="3.30.2060.10">
    <property type="entry name" value="Penicillin-binding protein 1b domain"/>
    <property type="match status" value="1"/>
</dbReference>
<dbReference type="Gene3D" id="3.90.1150.50">
    <property type="entry name" value="Transcription-repair-coupling factor, D7 domain"/>
    <property type="match status" value="1"/>
</dbReference>
<dbReference type="HAMAP" id="MF_00969">
    <property type="entry name" value="TRCF"/>
    <property type="match status" value="1"/>
</dbReference>
<dbReference type="InterPro" id="IPR003711">
    <property type="entry name" value="CarD-like/TRCF_RID"/>
</dbReference>
<dbReference type="InterPro" id="IPR036101">
    <property type="entry name" value="CarD-like/TRCF_RID_sf"/>
</dbReference>
<dbReference type="InterPro" id="IPR011545">
    <property type="entry name" value="DEAD/DEAH_box_helicase_dom"/>
</dbReference>
<dbReference type="InterPro" id="IPR014001">
    <property type="entry name" value="Helicase_ATP-bd"/>
</dbReference>
<dbReference type="InterPro" id="IPR001650">
    <property type="entry name" value="Helicase_C-like"/>
</dbReference>
<dbReference type="InterPro" id="IPR004576">
    <property type="entry name" value="Mfd"/>
</dbReference>
<dbReference type="InterPro" id="IPR027417">
    <property type="entry name" value="P-loop_NTPase"/>
</dbReference>
<dbReference type="InterPro" id="IPR050880">
    <property type="entry name" value="PriA_helicase"/>
</dbReference>
<dbReference type="InterPro" id="IPR037235">
    <property type="entry name" value="TRCF-like_C_D7"/>
</dbReference>
<dbReference type="InterPro" id="IPR005118">
    <property type="entry name" value="TRCF_C"/>
</dbReference>
<dbReference type="InterPro" id="IPR041471">
    <property type="entry name" value="UvrB_inter"/>
</dbReference>
<dbReference type="NCBIfam" id="TIGR00580">
    <property type="entry name" value="mfd"/>
    <property type="match status" value="1"/>
</dbReference>
<dbReference type="PANTHER" id="PTHR30580">
    <property type="entry name" value="PRIMOSOMAL PROTEIN N"/>
    <property type="match status" value="1"/>
</dbReference>
<dbReference type="PANTHER" id="PTHR30580:SF0">
    <property type="entry name" value="PRIMOSOMAL PROTEIN N"/>
    <property type="match status" value="1"/>
</dbReference>
<dbReference type="Pfam" id="PF02559">
    <property type="entry name" value="CarD_TRCF_RID"/>
    <property type="match status" value="1"/>
</dbReference>
<dbReference type="Pfam" id="PF00270">
    <property type="entry name" value="DEAD"/>
    <property type="match status" value="1"/>
</dbReference>
<dbReference type="Pfam" id="PF00271">
    <property type="entry name" value="Helicase_C"/>
    <property type="match status" value="1"/>
</dbReference>
<dbReference type="Pfam" id="PF03461">
    <property type="entry name" value="TRCF"/>
    <property type="match status" value="1"/>
</dbReference>
<dbReference type="Pfam" id="PF17757">
    <property type="entry name" value="UvrB_inter"/>
    <property type="match status" value="1"/>
</dbReference>
<dbReference type="SMART" id="SM01058">
    <property type="entry name" value="CarD_TRCF"/>
    <property type="match status" value="1"/>
</dbReference>
<dbReference type="SMART" id="SM00487">
    <property type="entry name" value="DEXDc"/>
    <property type="match status" value="1"/>
</dbReference>
<dbReference type="SMART" id="SM00490">
    <property type="entry name" value="HELICc"/>
    <property type="match status" value="1"/>
</dbReference>
<dbReference type="SMART" id="SM00982">
    <property type="entry name" value="TRCF"/>
    <property type="match status" value="1"/>
</dbReference>
<dbReference type="SUPFAM" id="SSF141259">
    <property type="entry name" value="CarD-like"/>
    <property type="match status" value="1"/>
</dbReference>
<dbReference type="SUPFAM" id="SSF52540">
    <property type="entry name" value="P-loop containing nucleoside triphosphate hydrolases"/>
    <property type="match status" value="2"/>
</dbReference>
<dbReference type="SUPFAM" id="SSF143517">
    <property type="entry name" value="TRCF domain-like"/>
    <property type="match status" value="1"/>
</dbReference>
<dbReference type="PROSITE" id="PS51192">
    <property type="entry name" value="HELICASE_ATP_BIND_1"/>
    <property type="match status" value="1"/>
</dbReference>
<dbReference type="PROSITE" id="PS51194">
    <property type="entry name" value="HELICASE_CTER"/>
    <property type="match status" value="1"/>
</dbReference>
<evidence type="ECO:0000255" key="1">
    <source>
        <dbReference type="HAMAP-Rule" id="MF_00969"/>
    </source>
</evidence>
<protein>
    <recommendedName>
        <fullName evidence="1">Transcription-repair-coupling factor</fullName>
        <shortName evidence="1">TRCF</shortName>
        <ecNumber evidence="1">3.6.4.-</ecNumber>
    </recommendedName>
</protein>
<gene>
    <name evidence="1" type="primary">mfd</name>
    <name type="ordered locus">jhp_1458</name>
</gene>
<proteinExistence type="inferred from homology"/>
<name>MFD_HELPJ</name>
<sequence>MIQSSLYRALNKGFDYQILACKDFKESELAKEVISYFKPNIKAVLFPELRAKKNDDLRSFFEEFLQLLGGLREFYQALENKQETIIIAPISALLHPLPKKELLESFKITLLEKYNLKDLKDKLFYYGYEILDLVEVEGEASFRGDIVDIYIPNSKAYRLSFFDAECESIKELDPATQMSLKEDLLEIEIPPTLFSLDEPSYKDLKTKVEQSPLNSFSKDLTSFGLWFLGEKANDLLGVYQSIISPRALEEIQELASLNELDDERFKFLKVLENAQGYEDLEIHVHALEGFIALHSNRKITLLAPNKTILDNSISVLDAGNMECVIAPFVLNFKTPDRIFISLNSFERKKKRQKSKLALNELNAGEWVVHDDYGVGVFSQLIQHSVLGSKRDFLEIAYLGEDKLLLPVENLHLIARYVVQSDSVPVKDRLGKGSFLKLKAKVRAKLLEIAGKIIELAAERNLILGKKMDTHLAELEIFKSHAGFEYTSDQEKAIAEISRDLSSHRVMDRLLSGDVGFGKTEVAMHAIFCAFLNGFQSALVVPTTLLAHQHFETLKARFENFGVKVARLDRYIKTSEKSKLLKAVELGLVDVLIGTHAILGTKFKNLGLMVVDEEHKFGVKQKEALKELSKSVHFLSMSATPIPRTLNMALSQIKGISSLKTPPTDRKPSRTFLKEKNDELLKEIIYRELRRNGQIFYIHNHIASISKVKTKLEDLIPKLKIAILHSQINANESEEIMLEFAKGNYQVLLCTSIVESGIHLPNANTIIIDNAQNFGLADLHQLRGRVGRGKKEGFCYFLIEDQKSLNEQALKRLLALEKNSYLGSGESIAYHDLEIRGGGNLLGQDQSGHIKNIGYALYTRMLEDAIYELSGGKKRLEKSVEIQLGVSAFLNPELIASDSLRLDLYRRLSLCENVDEVGQIHEEIEDRFGKMDDLSAQFLQIITLKILANQLGILKLSNFNQNITLTYSDEKKESLKAPSKDDNDILETLLKHLHAQISLKRR</sequence>